<gene>
    <name evidence="1" type="primary">MRI1</name>
    <name type="ORF">HCAG_04072</name>
</gene>
<keyword id="KW-0028">Amino-acid biosynthesis</keyword>
<keyword id="KW-0963">Cytoplasm</keyword>
<keyword id="KW-0413">Isomerase</keyword>
<keyword id="KW-0486">Methionine biosynthesis</keyword>
<keyword id="KW-0539">Nucleus</keyword>
<keyword id="KW-1185">Reference proteome</keyword>
<proteinExistence type="inferred from homology"/>
<comment type="function">
    <text evidence="1">Catalyzes the interconversion of methylthioribose-1-phosphate (MTR-1-P) into methylthioribulose-1-phosphate (MTRu-1-P).</text>
</comment>
<comment type="catalytic activity">
    <reaction evidence="1">
        <text>5-(methylsulfanyl)-alpha-D-ribose 1-phosphate = 5-(methylsulfanyl)-D-ribulose 1-phosphate</text>
        <dbReference type="Rhea" id="RHEA:19989"/>
        <dbReference type="ChEBI" id="CHEBI:58533"/>
        <dbReference type="ChEBI" id="CHEBI:58548"/>
        <dbReference type="EC" id="5.3.1.23"/>
    </reaction>
</comment>
<comment type="pathway">
    <text evidence="1">Amino-acid biosynthesis; L-methionine biosynthesis via salvage pathway; L-methionine from S-methyl-5-thio-alpha-D-ribose 1-phosphate: step 1/6.</text>
</comment>
<comment type="subcellular location">
    <subcellularLocation>
        <location evidence="1">Cytoplasm</location>
    </subcellularLocation>
    <subcellularLocation>
        <location evidence="1">Nucleus</location>
    </subcellularLocation>
</comment>
<comment type="similarity">
    <text evidence="1">Belongs to the eIF-2B alpha/beta/delta subunits family. MtnA subfamily.</text>
</comment>
<protein>
    <recommendedName>
        <fullName evidence="1">Methylthioribose-1-phosphate isomerase</fullName>
        <shortName evidence="1">M1Pi</shortName>
        <shortName evidence="1">MTR-1-P isomerase</shortName>
        <ecNumber evidence="1">5.3.1.23</ecNumber>
    </recommendedName>
    <alternativeName>
        <fullName evidence="1">S-methyl-5-thioribose-1-phosphate isomerase</fullName>
    </alternativeName>
    <alternativeName>
        <fullName evidence="1">Translation initiation factor eIF-2B subunit alpha/beta/delta-like protein</fullName>
    </alternativeName>
</protein>
<name>MTNA_AJECN</name>
<organism>
    <name type="scientific">Ajellomyces capsulatus (strain NAm1 / WU24)</name>
    <name type="common">Darling's disease fungus</name>
    <name type="synonym">Histoplasma capsulatum</name>
    <dbReference type="NCBI Taxonomy" id="2059318"/>
    <lineage>
        <taxon>Eukaryota</taxon>
        <taxon>Fungi</taxon>
        <taxon>Dikarya</taxon>
        <taxon>Ascomycota</taxon>
        <taxon>Pezizomycotina</taxon>
        <taxon>Eurotiomycetes</taxon>
        <taxon>Eurotiomycetidae</taxon>
        <taxon>Onygenales</taxon>
        <taxon>Ajellomycetaceae</taxon>
        <taxon>Histoplasma</taxon>
    </lineage>
</organism>
<accession>A6R364</accession>
<dbReference type="EC" id="5.3.1.23" evidence="1"/>
<dbReference type="EMBL" id="CH476658">
    <property type="protein sequence ID" value="EDN07562.1"/>
    <property type="molecule type" value="Genomic_DNA"/>
</dbReference>
<dbReference type="SMR" id="A6R364"/>
<dbReference type="STRING" id="339724.A6R364"/>
<dbReference type="KEGG" id="aje:HCAG_04072"/>
<dbReference type="VEuPathDB" id="FungiDB:HCAG_04072"/>
<dbReference type="HOGENOM" id="CLU_016218_1_3_1"/>
<dbReference type="OMA" id="CETRPLN"/>
<dbReference type="OrthoDB" id="9468at299071"/>
<dbReference type="UniPathway" id="UPA00904">
    <property type="reaction ID" value="UER00874"/>
</dbReference>
<dbReference type="Proteomes" id="UP000009297">
    <property type="component" value="Unassembled WGS sequence"/>
</dbReference>
<dbReference type="GO" id="GO:0005737">
    <property type="term" value="C:cytoplasm"/>
    <property type="evidence" value="ECO:0007669"/>
    <property type="project" value="UniProtKB-SubCell"/>
</dbReference>
<dbReference type="GO" id="GO:0005634">
    <property type="term" value="C:nucleus"/>
    <property type="evidence" value="ECO:0007669"/>
    <property type="project" value="UniProtKB-SubCell"/>
</dbReference>
<dbReference type="GO" id="GO:0046523">
    <property type="term" value="F:S-methyl-5-thioribose-1-phosphate isomerase activity"/>
    <property type="evidence" value="ECO:0007669"/>
    <property type="project" value="UniProtKB-UniRule"/>
</dbReference>
<dbReference type="GO" id="GO:0019509">
    <property type="term" value="P:L-methionine salvage from methylthioadenosine"/>
    <property type="evidence" value="ECO:0007669"/>
    <property type="project" value="UniProtKB-UniRule"/>
</dbReference>
<dbReference type="FunFam" id="1.20.120.420:FF:000003">
    <property type="entry name" value="Methylthioribose-1-phosphate isomerase"/>
    <property type="match status" value="1"/>
</dbReference>
<dbReference type="FunFam" id="3.40.50.10470:FF:000003">
    <property type="entry name" value="Methylthioribose-1-phosphate isomerase"/>
    <property type="match status" value="1"/>
</dbReference>
<dbReference type="Gene3D" id="1.20.120.420">
    <property type="entry name" value="translation initiation factor eif-2b, domain 1"/>
    <property type="match status" value="1"/>
</dbReference>
<dbReference type="Gene3D" id="3.40.50.10470">
    <property type="entry name" value="Translation initiation factor eif-2b, domain 2"/>
    <property type="match status" value="1"/>
</dbReference>
<dbReference type="HAMAP" id="MF_01678">
    <property type="entry name" value="Salvage_MtnA"/>
    <property type="match status" value="1"/>
</dbReference>
<dbReference type="InterPro" id="IPR000649">
    <property type="entry name" value="IF-2B-related"/>
</dbReference>
<dbReference type="InterPro" id="IPR005251">
    <property type="entry name" value="IF-M1Pi"/>
</dbReference>
<dbReference type="InterPro" id="IPR042529">
    <property type="entry name" value="IF_2B-like_C"/>
</dbReference>
<dbReference type="InterPro" id="IPR011559">
    <property type="entry name" value="Initiation_fac_2B_a/b/d"/>
</dbReference>
<dbReference type="InterPro" id="IPR027363">
    <property type="entry name" value="M1Pi_N"/>
</dbReference>
<dbReference type="InterPro" id="IPR037171">
    <property type="entry name" value="NagB/RpiA_transferase-like"/>
</dbReference>
<dbReference type="NCBIfam" id="TIGR00524">
    <property type="entry name" value="eIF-2B_rel"/>
    <property type="match status" value="1"/>
</dbReference>
<dbReference type="NCBIfam" id="NF004326">
    <property type="entry name" value="PRK05720.1"/>
    <property type="match status" value="1"/>
</dbReference>
<dbReference type="NCBIfam" id="TIGR00512">
    <property type="entry name" value="salvage_mtnA"/>
    <property type="match status" value="1"/>
</dbReference>
<dbReference type="PANTHER" id="PTHR43475">
    <property type="entry name" value="METHYLTHIORIBOSE-1-PHOSPHATE ISOMERASE"/>
    <property type="match status" value="1"/>
</dbReference>
<dbReference type="PANTHER" id="PTHR43475:SF1">
    <property type="entry name" value="METHYLTHIORIBOSE-1-PHOSPHATE ISOMERASE"/>
    <property type="match status" value="1"/>
</dbReference>
<dbReference type="Pfam" id="PF01008">
    <property type="entry name" value="IF-2B"/>
    <property type="match status" value="1"/>
</dbReference>
<dbReference type="SUPFAM" id="SSF100950">
    <property type="entry name" value="NagB/RpiA/CoA transferase-like"/>
    <property type="match status" value="1"/>
</dbReference>
<reference key="1">
    <citation type="journal article" date="2009" name="Genome Res.">
        <title>Comparative genomic analyses of the human fungal pathogens Coccidioides and their relatives.</title>
        <authorList>
            <person name="Sharpton T.J."/>
            <person name="Stajich J.E."/>
            <person name="Rounsley S.D."/>
            <person name="Gardner M.J."/>
            <person name="Wortman J.R."/>
            <person name="Jordar V.S."/>
            <person name="Maiti R."/>
            <person name="Kodira C.D."/>
            <person name="Neafsey D.E."/>
            <person name="Zeng Q."/>
            <person name="Hung C.-Y."/>
            <person name="McMahan C."/>
            <person name="Muszewska A."/>
            <person name="Grynberg M."/>
            <person name="Mandel M.A."/>
            <person name="Kellner E.M."/>
            <person name="Barker B.M."/>
            <person name="Galgiani J.N."/>
            <person name="Orbach M.J."/>
            <person name="Kirkland T.N."/>
            <person name="Cole G.T."/>
            <person name="Henn M.R."/>
            <person name="Birren B.W."/>
            <person name="Taylor J.W."/>
        </authorList>
    </citation>
    <scope>NUCLEOTIDE SEQUENCE [LARGE SCALE GENOMIC DNA]</scope>
    <source>
        <strain>NAm1 / WU24</strain>
    </source>
</reference>
<feature type="chain" id="PRO_0000402008" description="Methylthioribose-1-phosphate isomerase">
    <location>
        <begin position="1"/>
        <end position="391"/>
    </location>
</feature>
<feature type="active site" description="Proton donor" evidence="1">
    <location>
        <position position="267"/>
    </location>
</feature>
<feature type="site" description="Transition state stabilizer" evidence="1">
    <location>
        <position position="179"/>
    </location>
</feature>
<evidence type="ECO:0000255" key="1">
    <source>
        <dbReference type="HAMAP-Rule" id="MF_03119"/>
    </source>
</evidence>
<sequence>MTLVAITYTRGSLHILNQLLLPHQTTYDPLHSARDAWHAIHEMRVRGAPAIAIVAALSLAVELHTLATSNQLSAEPKDVGQLILEKLEFLVSSRPTAVNLAEAAGRLGRIVNGRAQVQGVGGNEVAEAYIEAAERMLDDDVRDNRAIGESGAKWVLEHAITKGSISGTGQAKVAVLTHCNTGSLATAGYGTALGVIRSLHATGSLERAYCTETRPYNQGSRLTAFELVHDNIPATLITDSMAAALLARQSAGPAQSVGVSAIIVGADRVAANGDTANKIGTYGLAVLAKYHGVKFLVAAPRTTIDMNTKTGADIVIEERPEKEVTRIRGPRDGEEGNGLGAMETITVAADGIGVWNPAFDVTPAALVDGIITEVGVVEKDGSGVFHLERIF</sequence>